<evidence type="ECO:0000255" key="1">
    <source>
        <dbReference type="HAMAP-Rule" id="MF_00581"/>
    </source>
</evidence>
<dbReference type="EC" id="6.3.4.5" evidence="1"/>
<dbReference type="EMBL" id="CP002038">
    <property type="protein sequence ID" value="ADN00621.1"/>
    <property type="molecule type" value="Genomic_DNA"/>
</dbReference>
<dbReference type="EMBL" id="X74409">
    <property type="protein sequence ID" value="CAA52426.1"/>
    <property type="molecule type" value="Genomic_DNA"/>
</dbReference>
<dbReference type="PIR" id="S35972">
    <property type="entry name" value="S35972"/>
</dbReference>
<dbReference type="RefSeq" id="WP_013320016.1">
    <property type="nucleotide sequence ID" value="NC_014500.1"/>
</dbReference>
<dbReference type="SMR" id="P0C1A1"/>
<dbReference type="STRING" id="198628.Dda3937_00977"/>
<dbReference type="GeneID" id="55486969"/>
<dbReference type="KEGG" id="ddd:Dda3937_00977"/>
<dbReference type="PATRIC" id="fig|198628.6.peg.4372"/>
<dbReference type="eggNOG" id="COG0137">
    <property type="taxonomic scope" value="Bacteria"/>
</dbReference>
<dbReference type="HOGENOM" id="CLU_032784_4_1_6"/>
<dbReference type="OrthoDB" id="9801641at2"/>
<dbReference type="UniPathway" id="UPA00068">
    <property type="reaction ID" value="UER00113"/>
</dbReference>
<dbReference type="Proteomes" id="UP000006859">
    <property type="component" value="Chromosome"/>
</dbReference>
<dbReference type="GO" id="GO:0005737">
    <property type="term" value="C:cytoplasm"/>
    <property type="evidence" value="ECO:0007669"/>
    <property type="project" value="UniProtKB-SubCell"/>
</dbReference>
<dbReference type="GO" id="GO:0004055">
    <property type="term" value="F:argininosuccinate synthase activity"/>
    <property type="evidence" value="ECO:0007669"/>
    <property type="project" value="UniProtKB-UniRule"/>
</dbReference>
<dbReference type="GO" id="GO:0005524">
    <property type="term" value="F:ATP binding"/>
    <property type="evidence" value="ECO:0007669"/>
    <property type="project" value="UniProtKB-UniRule"/>
</dbReference>
<dbReference type="GO" id="GO:0042803">
    <property type="term" value="F:protein homodimerization activity"/>
    <property type="evidence" value="ECO:0007669"/>
    <property type="project" value="InterPro"/>
</dbReference>
<dbReference type="GO" id="GO:0000053">
    <property type="term" value="P:argininosuccinate metabolic process"/>
    <property type="evidence" value="ECO:0007669"/>
    <property type="project" value="TreeGrafter"/>
</dbReference>
<dbReference type="GO" id="GO:0006526">
    <property type="term" value="P:L-arginine biosynthetic process"/>
    <property type="evidence" value="ECO:0007669"/>
    <property type="project" value="UniProtKB-UniRule"/>
</dbReference>
<dbReference type="GO" id="GO:0000050">
    <property type="term" value="P:urea cycle"/>
    <property type="evidence" value="ECO:0007669"/>
    <property type="project" value="TreeGrafter"/>
</dbReference>
<dbReference type="CDD" id="cd01999">
    <property type="entry name" value="ASS"/>
    <property type="match status" value="1"/>
</dbReference>
<dbReference type="FunFam" id="1.10.287.400:FF:000001">
    <property type="entry name" value="Argininosuccinate synthase"/>
    <property type="match status" value="1"/>
</dbReference>
<dbReference type="Gene3D" id="1.10.287.400">
    <property type="match status" value="1"/>
</dbReference>
<dbReference type="Gene3D" id="3.90.1260.10">
    <property type="entry name" value="Argininosuccinate synthetase, chain A, domain 2"/>
    <property type="match status" value="1"/>
</dbReference>
<dbReference type="Gene3D" id="3.40.50.620">
    <property type="entry name" value="HUPs"/>
    <property type="match status" value="1"/>
</dbReference>
<dbReference type="HAMAP" id="MF_00581">
    <property type="entry name" value="Arg_succ_synth_type2"/>
    <property type="match status" value="1"/>
</dbReference>
<dbReference type="InterPro" id="IPR023437">
    <property type="entry name" value="Arg_succ_synth_type2_subfam"/>
</dbReference>
<dbReference type="InterPro" id="IPR048268">
    <property type="entry name" value="Arginosuc_syn_C"/>
</dbReference>
<dbReference type="InterPro" id="IPR048267">
    <property type="entry name" value="Arginosuc_syn_N"/>
</dbReference>
<dbReference type="InterPro" id="IPR001518">
    <property type="entry name" value="Arginosuc_synth"/>
</dbReference>
<dbReference type="InterPro" id="IPR018223">
    <property type="entry name" value="Arginosuc_synth_CS"/>
</dbReference>
<dbReference type="InterPro" id="IPR023434">
    <property type="entry name" value="Arginosuc_synth_type_1_subfam"/>
</dbReference>
<dbReference type="InterPro" id="IPR024074">
    <property type="entry name" value="AS_cat/multimer_dom_body"/>
</dbReference>
<dbReference type="InterPro" id="IPR024073">
    <property type="entry name" value="AS_multimer_C_tail"/>
</dbReference>
<dbReference type="InterPro" id="IPR014729">
    <property type="entry name" value="Rossmann-like_a/b/a_fold"/>
</dbReference>
<dbReference type="NCBIfam" id="TIGR00032">
    <property type="entry name" value="argG"/>
    <property type="match status" value="1"/>
</dbReference>
<dbReference type="NCBIfam" id="NF003779">
    <property type="entry name" value="PRK05370.1"/>
    <property type="match status" value="1"/>
</dbReference>
<dbReference type="PANTHER" id="PTHR11587">
    <property type="entry name" value="ARGININOSUCCINATE SYNTHASE"/>
    <property type="match status" value="1"/>
</dbReference>
<dbReference type="PANTHER" id="PTHR11587:SF2">
    <property type="entry name" value="ARGININOSUCCINATE SYNTHASE"/>
    <property type="match status" value="1"/>
</dbReference>
<dbReference type="Pfam" id="PF20979">
    <property type="entry name" value="Arginosuc_syn_C"/>
    <property type="match status" value="1"/>
</dbReference>
<dbReference type="Pfam" id="PF00764">
    <property type="entry name" value="Arginosuc_synth"/>
    <property type="match status" value="1"/>
</dbReference>
<dbReference type="SUPFAM" id="SSF52402">
    <property type="entry name" value="Adenine nucleotide alpha hydrolases-like"/>
    <property type="match status" value="1"/>
</dbReference>
<dbReference type="SUPFAM" id="SSF69864">
    <property type="entry name" value="Argininosuccinate synthetase, C-terminal domain"/>
    <property type="match status" value="1"/>
</dbReference>
<dbReference type="PROSITE" id="PS00564">
    <property type="entry name" value="ARGININOSUCCIN_SYN_1"/>
    <property type="match status" value="1"/>
</dbReference>
<dbReference type="PROSITE" id="PS00565">
    <property type="entry name" value="ARGININOSUCCIN_SYN_2"/>
    <property type="match status" value="1"/>
</dbReference>
<feature type="chain" id="PRO_0000233029" description="Argininosuccinate synthase">
    <location>
        <begin position="1"/>
        <end position="449"/>
    </location>
</feature>
<feature type="binding site" evidence="1">
    <location>
        <begin position="17"/>
        <end position="25"/>
    </location>
    <ligand>
        <name>ATP</name>
        <dbReference type="ChEBI" id="CHEBI:30616"/>
    </ligand>
</feature>
<feature type="binding site" evidence="1">
    <location>
        <position position="43"/>
    </location>
    <ligand>
        <name>ATP</name>
        <dbReference type="ChEBI" id="CHEBI:30616"/>
    </ligand>
</feature>
<feature type="binding site" evidence="1">
    <location>
        <position position="99"/>
    </location>
    <ligand>
        <name>L-citrulline</name>
        <dbReference type="ChEBI" id="CHEBI:57743"/>
    </ligand>
</feature>
<feature type="binding site" evidence="1">
    <location>
        <position position="129"/>
    </location>
    <ligand>
        <name>ATP</name>
        <dbReference type="ChEBI" id="CHEBI:30616"/>
    </ligand>
</feature>
<feature type="binding site" evidence="1">
    <location>
        <position position="131"/>
    </location>
    <ligand>
        <name>ATP</name>
        <dbReference type="ChEBI" id="CHEBI:30616"/>
    </ligand>
</feature>
<feature type="binding site" evidence="1">
    <location>
        <position position="131"/>
    </location>
    <ligand>
        <name>L-aspartate</name>
        <dbReference type="ChEBI" id="CHEBI:29991"/>
    </ligand>
</feature>
<feature type="binding site" evidence="1">
    <location>
        <position position="135"/>
    </location>
    <ligand>
        <name>L-aspartate</name>
        <dbReference type="ChEBI" id="CHEBI:29991"/>
    </ligand>
</feature>
<feature type="binding site" evidence="1">
    <location>
        <position position="135"/>
    </location>
    <ligand>
        <name>L-citrulline</name>
        <dbReference type="ChEBI" id="CHEBI:57743"/>
    </ligand>
</feature>
<feature type="binding site" evidence="1">
    <location>
        <position position="136"/>
    </location>
    <ligand>
        <name>ATP</name>
        <dbReference type="ChEBI" id="CHEBI:30616"/>
    </ligand>
</feature>
<feature type="binding site" evidence="1">
    <location>
        <position position="136"/>
    </location>
    <ligand>
        <name>L-aspartate</name>
        <dbReference type="ChEBI" id="CHEBI:29991"/>
    </ligand>
</feature>
<feature type="binding site" evidence="1">
    <location>
        <position position="139"/>
    </location>
    <ligand>
        <name>L-citrulline</name>
        <dbReference type="ChEBI" id="CHEBI:57743"/>
    </ligand>
</feature>
<feature type="binding site" evidence="1">
    <location>
        <position position="192"/>
    </location>
    <ligand>
        <name>L-citrulline</name>
        <dbReference type="ChEBI" id="CHEBI:57743"/>
    </ligand>
</feature>
<feature type="binding site" evidence="1">
    <location>
        <position position="194"/>
    </location>
    <ligand>
        <name>ATP</name>
        <dbReference type="ChEBI" id="CHEBI:30616"/>
    </ligand>
</feature>
<feature type="binding site" evidence="1">
    <location>
        <position position="201"/>
    </location>
    <ligand>
        <name>L-citrulline</name>
        <dbReference type="ChEBI" id="CHEBI:57743"/>
    </ligand>
</feature>
<feature type="binding site" evidence="1">
    <location>
        <position position="203"/>
    </location>
    <ligand>
        <name>L-citrulline</name>
        <dbReference type="ChEBI" id="CHEBI:57743"/>
    </ligand>
</feature>
<feature type="binding site" evidence="1">
    <location>
        <position position="280"/>
    </location>
    <ligand>
        <name>L-citrulline</name>
        <dbReference type="ChEBI" id="CHEBI:57743"/>
    </ligand>
</feature>
<keyword id="KW-0028">Amino-acid biosynthesis</keyword>
<keyword id="KW-0055">Arginine biosynthesis</keyword>
<keyword id="KW-0067">ATP-binding</keyword>
<keyword id="KW-0963">Cytoplasm</keyword>
<keyword id="KW-0436">Ligase</keyword>
<keyword id="KW-0547">Nucleotide-binding</keyword>
<keyword id="KW-1185">Reference proteome</keyword>
<accession>P0C1A1</accession>
<accession>E0SMI2</accession>
<accession>P42181</accession>
<accession>Q9KHB9</accession>
<gene>
    <name evidence="1" type="primary">argG</name>
    <name type="ordered locus">Dda3937_00977</name>
</gene>
<comment type="catalytic activity">
    <reaction evidence="1">
        <text>L-citrulline + L-aspartate + ATP = 2-(N(omega)-L-arginino)succinate + AMP + diphosphate + H(+)</text>
        <dbReference type="Rhea" id="RHEA:10932"/>
        <dbReference type="ChEBI" id="CHEBI:15378"/>
        <dbReference type="ChEBI" id="CHEBI:29991"/>
        <dbReference type="ChEBI" id="CHEBI:30616"/>
        <dbReference type="ChEBI" id="CHEBI:33019"/>
        <dbReference type="ChEBI" id="CHEBI:57472"/>
        <dbReference type="ChEBI" id="CHEBI:57743"/>
        <dbReference type="ChEBI" id="CHEBI:456215"/>
        <dbReference type="EC" id="6.3.4.5"/>
    </reaction>
</comment>
<comment type="pathway">
    <text evidence="1">Amino-acid biosynthesis; L-arginine biosynthesis; L-arginine from L-ornithine and carbamoyl phosphate: step 2/3.</text>
</comment>
<comment type="subunit">
    <text evidence="1">Homotetramer.</text>
</comment>
<comment type="subcellular location">
    <subcellularLocation>
        <location evidence="1">Cytoplasm</location>
    </subcellularLocation>
</comment>
<comment type="similarity">
    <text evidence="1">Belongs to the argininosuccinate synthase family. Type 2 subfamily.</text>
</comment>
<protein>
    <recommendedName>
        <fullName evidence="1">Argininosuccinate synthase</fullName>
        <ecNumber evidence="1">6.3.4.5</ecNumber>
    </recommendedName>
    <alternativeName>
        <fullName evidence="1">Citrulline--aspartate ligase</fullName>
    </alternativeName>
</protein>
<reference key="1">
    <citation type="journal article" date="2011" name="J. Bacteriol.">
        <title>Genome sequence of the plant-pathogenic bacterium Dickeya dadantii 3937.</title>
        <authorList>
            <person name="Glasner J.D."/>
            <person name="Yang C.H."/>
            <person name="Reverchon S."/>
            <person name="Hugouvieux-Cotte-Pattat N."/>
            <person name="Condemine G."/>
            <person name="Bohin J.P."/>
            <person name="Van Gijsegem F."/>
            <person name="Yang S."/>
            <person name="Franza T."/>
            <person name="Expert D."/>
            <person name="Plunkett G. III"/>
            <person name="San Francisco M.J."/>
            <person name="Charkowski A.O."/>
            <person name="Py B."/>
            <person name="Bell K."/>
            <person name="Rauscher L."/>
            <person name="Rodriguez-Palenzuela P."/>
            <person name="Toussaint A."/>
            <person name="Holeva M.C."/>
            <person name="He S.Y."/>
            <person name="Douet V."/>
            <person name="Boccara M."/>
            <person name="Blanco C."/>
            <person name="Toth I."/>
            <person name="Anderson B.D."/>
            <person name="Biehl B.S."/>
            <person name="Mau B."/>
            <person name="Flynn S.M."/>
            <person name="Barras F."/>
            <person name="Lindeberg M."/>
            <person name="Birch P.R."/>
            <person name="Tsuyumu S."/>
            <person name="Shi X."/>
            <person name="Hibbing M."/>
            <person name="Yap M.N."/>
            <person name="Carpentier M."/>
            <person name="Dassa E."/>
            <person name="Umehara M."/>
            <person name="Kim J.F."/>
            <person name="Rusch M."/>
            <person name="Soni P."/>
            <person name="Mayhew G.F."/>
            <person name="Fouts D.E."/>
            <person name="Gill S.R."/>
            <person name="Blattner F.R."/>
            <person name="Keen N.T."/>
            <person name="Perna N.T."/>
        </authorList>
    </citation>
    <scope>NUCLEOTIDE SEQUENCE [LARGE SCALE GENOMIC DNA]</scope>
    <source>
        <strain>3937</strain>
    </source>
</reference>
<reference key="2">
    <citation type="journal article" date="1994" name="Mol. Microbiol.">
        <title>pecS: a locus controlling pectinase, cellulase and blue pigment production in Erwinia chrysanthemi.</title>
        <authorList>
            <person name="Reverchon S."/>
            <person name="Nasser W."/>
            <person name="Robert-Baudouy J."/>
        </authorList>
    </citation>
    <scope>NUCLEOTIDE SEQUENCE [GENOMIC DNA] OF 353-449</scope>
    <source>
        <strain>3937</strain>
    </source>
</reference>
<organism>
    <name type="scientific">Dickeya dadantii (strain 3937)</name>
    <name type="common">Erwinia chrysanthemi (strain 3937)</name>
    <dbReference type="NCBI Taxonomy" id="198628"/>
    <lineage>
        <taxon>Bacteria</taxon>
        <taxon>Pseudomonadati</taxon>
        <taxon>Pseudomonadota</taxon>
        <taxon>Gammaproteobacteria</taxon>
        <taxon>Enterobacterales</taxon>
        <taxon>Pectobacteriaceae</taxon>
        <taxon>Dickeya</taxon>
    </lineage>
</organism>
<proteinExistence type="inferred from homology"/>
<name>ASSY_DICD3</name>
<sequence length="449" mass="50176">MTTILKHLPVGQRIGIAFSGGLDTSAALLWMRQKGAVPYAYTANLGQPDEDDYDAIPRRAKEYGAENARLIDCRKQLVAEGIAAIQCGAFHNTTGGMTYFNTTPLGRAVTGTMLVAAMKEDGVNIWGDGSTYKGNDIERFYRYGLLTNAELKIYKPWLDTDFIDELGGRQEMSEFMTTSGFDYKMSAEKAYSTDSNMLGATHEAKDLEFLNSSVKIVNPIMGVKFWDENVRIPAEEVTVRFERGHPVALNGQTFSDDVELLLEANRIGGRHGLGMSDQIENRIIEAKSRGIYEAPGMALLHIAYERLVTGIHNEDTIEQYHAHGRQLGRLLYQGRWFDPQALMLRDALQRWVASEITGEVTLELRRGNDYSILNTVSDNLTYKPERLTMEKGESVFSPDDRIGQLTMRNLDITDTREKLFNYVESGLIFSGNAGLPQVANPSLQDKSAK</sequence>